<comment type="function">
    <text>Guanine nucleotide-binding proteins (G proteins) are involved as a modulator or transducer in various transmembrane signaling systems. The beta and gamma chains are required for the GTPase activity, for replacement of GDP by GTP, and for G protein-effector interaction.</text>
</comment>
<comment type="subunit">
    <text>G proteins are composed of 3 units, alpha, beta and gamma.</text>
</comment>
<comment type="subcellular location">
    <subcellularLocation>
        <location evidence="2">Cell membrane</location>
        <topology evidence="2">Lipid-anchor</topology>
        <orientation evidence="2">Cytoplasmic side</orientation>
    </subcellularLocation>
</comment>
<comment type="similarity">
    <text evidence="2">Belongs to the G protein gamma family.</text>
</comment>
<proteinExistence type="evidence at protein level"/>
<organism>
    <name type="scientific">Mus musculus</name>
    <name type="common">Mouse</name>
    <dbReference type="NCBI Taxonomy" id="10090"/>
    <lineage>
        <taxon>Eukaryota</taxon>
        <taxon>Metazoa</taxon>
        <taxon>Chordata</taxon>
        <taxon>Craniata</taxon>
        <taxon>Vertebrata</taxon>
        <taxon>Euteleostomi</taxon>
        <taxon>Mammalia</taxon>
        <taxon>Eutheria</taxon>
        <taxon>Euarchontoglires</taxon>
        <taxon>Glires</taxon>
        <taxon>Rodentia</taxon>
        <taxon>Myomorpha</taxon>
        <taxon>Muroidea</taxon>
        <taxon>Muridae</taxon>
        <taxon>Murinae</taxon>
        <taxon>Mus</taxon>
        <taxon>Mus</taxon>
    </lineage>
</organism>
<reference key="1">
    <citation type="journal article" date="1999" name="Nat. Neurosci.">
        <title>Ggamma13 colocalizes with gustducin in taste receptor cells and mediates IP3 responses to bitter denatonium.</title>
        <authorList>
            <person name="Huang L."/>
            <person name="Shanker Y.G."/>
            <person name="Dubauskaite J."/>
            <person name="Zheng J.Z."/>
            <person name="Yan W."/>
            <person name="Rosenzweig S."/>
            <person name="Spielman A.I."/>
            <person name="Max M."/>
            <person name="Margolskee R.F."/>
        </authorList>
    </citation>
    <scope>NUCLEOTIDE SEQUENCE [MRNA]</scope>
    <source>
        <strain>C57BL/6J</strain>
    </source>
</reference>
<reference key="2">
    <citation type="journal article" date="2000" name="Biochem. Biophys. Res. Commun.">
        <title>Growth suppression of Escherichia coli by induction of expression of mammalian genes with transmembrane or ATPase domains.</title>
        <authorList>
            <person name="Inoue S."/>
            <person name="Sano H."/>
            <person name="Ohta M."/>
        </authorList>
    </citation>
    <scope>NUCLEOTIDE SEQUENCE [MRNA]</scope>
    <source>
        <tissue>Brain</tissue>
    </source>
</reference>
<reference key="3">
    <citation type="journal article" date="2005" name="Science">
        <title>The transcriptional landscape of the mammalian genome.</title>
        <authorList>
            <person name="Carninci P."/>
            <person name="Kasukawa T."/>
            <person name="Katayama S."/>
            <person name="Gough J."/>
            <person name="Frith M.C."/>
            <person name="Maeda N."/>
            <person name="Oyama R."/>
            <person name="Ravasi T."/>
            <person name="Lenhard B."/>
            <person name="Wells C."/>
            <person name="Kodzius R."/>
            <person name="Shimokawa K."/>
            <person name="Bajic V.B."/>
            <person name="Brenner S.E."/>
            <person name="Batalov S."/>
            <person name="Forrest A.R."/>
            <person name="Zavolan M."/>
            <person name="Davis M.J."/>
            <person name="Wilming L.G."/>
            <person name="Aidinis V."/>
            <person name="Allen J.E."/>
            <person name="Ambesi-Impiombato A."/>
            <person name="Apweiler R."/>
            <person name="Aturaliya R.N."/>
            <person name="Bailey T.L."/>
            <person name="Bansal M."/>
            <person name="Baxter L."/>
            <person name="Beisel K.W."/>
            <person name="Bersano T."/>
            <person name="Bono H."/>
            <person name="Chalk A.M."/>
            <person name="Chiu K.P."/>
            <person name="Choudhary V."/>
            <person name="Christoffels A."/>
            <person name="Clutterbuck D.R."/>
            <person name="Crowe M.L."/>
            <person name="Dalla E."/>
            <person name="Dalrymple B.P."/>
            <person name="de Bono B."/>
            <person name="Della Gatta G."/>
            <person name="di Bernardo D."/>
            <person name="Down T."/>
            <person name="Engstrom P."/>
            <person name="Fagiolini M."/>
            <person name="Faulkner G."/>
            <person name="Fletcher C.F."/>
            <person name="Fukushima T."/>
            <person name="Furuno M."/>
            <person name="Futaki S."/>
            <person name="Gariboldi M."/>
            <person name="Georgii-Hemming P."/>
            <person name="Gingeras T.R."/>
            <person name="Gojobori T."/>
            <person name="Green R.E."/>
            <person name="Gustincich S."/>
            <person name="Harbers M."/>
            <person name="Hayashi Y."/>
            <person name="Hensch T.K."/>
            <person name="Hirokawa N."/>
            <person name="Hill D."/>
            <person name="Huminiecki L."/>
            <person name="Iacono M."/>
            <person name="Ikeo K."/>
            <person name="Iwama A."/>
            <person name="Ishikawa T."/>
            <person name="Jakt M."/>
            <person name="Kanapin A."/>
            <person name="Katoh M."/>
            <person name="Kawasawa Y."/>
            <person name="Kelso J."/>
            <person name="Kitamura H."/>
            <person name="Kitano H."/>
            <person name="Kollias G."/>
            <person name="Krishnan S.P."/>
            <person name="Kruger A."/>
            <person name="Kummerfeld S.K."/>
            <person name="Kurochkin I.V."/>
            <person name="Lareau L.F."/>
            <person name="Lazarevic D."/>
            <person name="Lipovich L."/>
            <person name="Liu J."/>
            <person name="Liuni S."/>
            <person name="McWilliam S."/>
            <person name="Madan Babu M."/>
            <person name="Madera M."/>
            <person name="Marchionni L."/>
            <person name="Matsuda H."/>
            <person name="Matsuzawa S."/>
            <person name="Miki H."/>
            <person name="Mignone F."/>
            <person name="Miyake S."/>
            <person name="Morris K."/>
            <person name="Mottagui-Tabar S."/>
            <person name="Mulder N."/>
            <person name="Nakano N."/>
            <person name="Nakauchi H."/>
            <person name="Ng P."/>
            <person name="Nilsson R."/>
            <person name="Nishiguchi S."/>
            <person name="Nishikawa S."/>
            <person name="Nori F."/>
            <person name="Ohara O."/>
            <person name="Okazaki Y."/>
            <person name="Orlando V."/>
            <person name="Pang K.C."/>
            <person name="Pavan W.J."/>
            <person name="Pavesi G."/>
            <person name="Pesole G."/>
            <person name="Petrovsky N."/>
            <person name="Piazza S."/>
            <person name="Reed J."/>
            <person name="Reid J.F."/>
            <person name="Ring B.Z."/>
            <person name="Ringwald M."/>
            <person name="Rost B."/>
            <person name="Ruan Y."/>
            <person name="Salzberg S.L."/>
            <person name="Sandelin A."/>
            <person name="Schneider C."/>
            <person name="Schoenbach C."/>
            <person name="Sekiguchi K."/>
            <person name="Semple C.A."/>
            <person name="Seno S."/>
            <person name="Sessa L."/>
            <person name="Sheng Y."/>
            <person name="Shibata Y."/>
            <person name="Shimada H."/>
            <person name="Shimada K."/>
            <person name="Silva D."/>
            <person name="Sinclair B."/>
            <person name="Sperling S."/>
            <person name="Stupka E."/>
            <person name="Sugiura K."/>
            <person name="Sultana R."/>
            <person name="Takenaka Y."/>
            <person name="Taki K."/>
            <person name="Tammoja K."/>
            <person name="Tan S.L."/>
            <person name="Tang S."/>
            <person name="Taylor M.S."/>
            <person name="Tegner J."/>
            <person name="Teichmann S.A."/>
            <person name="Ueda H.R."/>
            <person name="van Nimwegen E."/>
            <person name="Verardo R."/>
            <person name="Wei C.L."/>
            <person name="Yagi K."/>
            <person name="Yamanishi H."/>
            <person name="Zabarovsky E."/>
            <person name="Zhu S."/>
            <person name="Zimmer A."/>
            <person name="Hide W."/>
            <person name="Bult C."/>
            <person name="Grimmond S.M."/>
            <person name="Teasdale R.D."/>
            <person name="Liu E.T."/>
            <person name="Brusic V."/>
            <person name="Quackenbush J."/>
            <person name="Wahlestedt C."/>
            <person name="Mattick J.S."/>
            <person name="Hume D.A."/>
            <person name="Kai C."/>
            <person name="Sasaki D."/>
            <person name="Tomaru Y."/>
            <person name="Fukuda S."/>
            <person name="Kanamori-Katayama M."/>
            <person name="Suzuki M."/>
            <person name="Aoki J."/>
            <person name="Arakawa T."/>
            <person name="Iida J."/>
            <person name="Imamura K."/>
            <person name="Itoh M."/>
            <person name="Kato T."/>
            <person name="Kawaji H."/>
            <person name="Kawagashira N."/>
            <person name="Kawashima T."/>
            <person name="Kojima M."/>
            <person name="Kondo S."/>
            <person name="Konno H."/>
            <person name="Nakano K."/>
            <person name="Ninomiya N."/>
            <person name="Nishio T."/>
            <person name="Okada M."/>
            <person name="Plessy C."/>
            <person name="Shibata K."/>
            <person name="Shiraki T."/>
            <person name="Suzuki S."/>
            <person name="Tagami M."/>
            <person name="Waki K."/>
            <person name="Watahiki A."/>
            <person name="Okamura-Oho Y."/>
            <person name="Suzuki H."/>
            <person name="Kawai J."/>
            <person name="Hayashizaki Y."/>
        </authorList>
    </citation>
    <scope>NUCLEOTIDE SEQUENCE [LARGE SCALE MRNA]</scope>
    <source>
        <strain>C57BL/6J</strain>
        <tissue>Cerebellum</tissue>
    </source>
</reference>
<reference key="4">
    <citation type="journal article" date="2004" name="Genome Res.">
        <title>The status, quality, and expansion of the NIH full-length cDNA project: the Mammalian Gene Collection (MGC).</title>
        <authorList>
            <consortium name="The MGC Project Team"/>
        </authorList>
    </citation>
    <scope>NUCLEOTIDE SEQUENCE [LARGE SCALE MRNA]</scope>
    <source>
        <tissue>Brain</tissue>
    </source>
</reference>
<reference key="5">
    <citation type="journal article" date="2010" name="Cell">
        <title>A tissue-specific atlas of mouse protein phosphorylation and expression.</title>
        <authorList>
            <person name="Huttlin E.L."/>
            <person name="Jedrychowski M.P."/>
            <person name="Elias J.E."/>
            <person name="Goswami T."/>
            <person name="Rad R."/>
            <person name="Beausoleil S.A."/>
            <person name="Villen J."/>
            <person name="Haas W."/>
            <person name="Sowa M.E."/>
            <person name="Gygi S.P."/>
        </authorList>
    </citation>
    <scope>IDENTIFICATION BY MASS SPECTROMETRY [LARGE SCALE ANALYSIS]</scope>
    <source>
        <tissue>Brain</tissue>
    </source>
</reference>
<feature type="chain" id="PRO_0000012673" description="Guanine nucleotide-binding protein G(I)/G(S)/G(O) subunit gamma-13">
    <location>
        <begin position="1"/>
        <end position="64"/>
    </location>
</feature>
<feature type="propeptide" id="PRO_0000012674" description="Removed in mature form" evidence="1">
    <location>
        <begin position="65"/>
        <end position="67"/>
    </location>
</feature>
<feature type="modified residue" description="Cysteine methyl ester" evidence="1">
    <location>
        <position position="64"/>
    </location>
</feature>
<feature type="lipid moiety-binding region" description="S-farnesyl cysteine" evidence="1">
    <location>
        <position position="64"/>
    </location>
</feature>
<protein>
    <recommendedName>
        <fullName>Guanine nucleotide-binding protein G(I)/G(S)/G(O) subunit gamma-13</fullName>
    </recommendedName>
</protein>
<sequence length="67" mass="7979">MEEWDVPQMKKEVESLKYQLAFKREMSSKTIPELLKWIEDGIPKDPFLNPDLMKNNPWVEKAKCTIL</sequence>
<accession>Q9JMF3</accession>
<keyword id="KW-1003">Cell membrane</keyword>
<keyword id="KW-0449">Lipoprotein</keyword>
<keyword id="KW-0472">Membrane</keyword>
<keyword id="KW-0488">Methylation</keyword>
<keyword id="KW-0636">Prenylation</keyword>
<keyword id="KW-1185">Reference proteome</keyword>
<keyword id="KW-0807">Transducer</keyword>
<name>GBG13_MOUSE</name>
<dbReference type="EMBL" id="AY029485">
    <property type="protein sequence ID" value="AAK40268.1"/>
    <property type="molecule type" value="mRNA"/>
</dbReference>
<dbReference type="EMBL" id="AB030194">
    <property type="protein sequence ID" value="BAA92757.1"/>
    <property type="molecule type" value="mRNA"/>
</dbReference>
<dbReference type="EMBL" id="AK018778">
    <property type="protein sequence ID" value="BAB31403.1"/>
    <property type="molecule type" value="mRNA"/>
</dbReference>
<dbReference type="EMBL" id="BC048431">
    <property type="protein sequence ID" value="AAH48431.1"/>
    <property type="molecule type" value="mRNA"/>
</dbReference>
<dbReference type="EMBL" id="BC059712">
    <property type="protein sequence ID" value="AAH59712.1"/>
    <property type="molecule type" value="mRNA"/>
</dbReference>
<dbReference type="CCDS" id="CCDS37503.1"/>
<dbReference type="RefSeq" id="NP_001344711.1">
    <property type="nucleotide sequence ID" value="NM_001357782.1"/>
</dbReference>
<dbReference type="RefSeq" id="NP_071867.1">
    <property type="nucleotide sequence ID" value="NM_022422.5"/>
</dbReference>
<dbReference type="RefSeq" id="XP_006524842.1">
    <property type="nucleotide sequence ID" value="XM_006524779.3"/>
</dbReference>
<dbReference type="SMR" id="Q9JMF3"/>
<dbReference type="BioGRID" id="211062">
    <property type="interactions" value="4"/>
</dbReference>
<dbReference type="DIP" id="DIP-46321N"/>
<dbReference type="FunCoup" id="Q9JMF3">
    <property type="interactions" value="1881"/>
</dbReference>
<dbReference type="IntAct" id="Q9JMF3">
    <property type="interactions" value="2"/>
</dbReference>
<dbReference type="STRING" id="10090.ENSMUSP00000131648"/>
<dbReference type="iPTMnet" id="Q9JMF3"/>
<dbReference type="PhosphoSitePlus" id="Q9JMF3"/>
<dbReference type="PaxDb" id="10090-ENSMUSP00000131648"/>
<dbReference type="PeptideAtlas" id="Q9JMF3"/>
<dbReference type="ProteomicsDB" id="268848"/>
<dbReference type="Antibodypedia" id="52208">
    <property type="antibodies" value="55 antibodies from 18 providers"/>
</dbReference>
<dbReference type="DNASU" id="64337"/>
<dbReference type="Ensembl" id="ENSMUST00000115108.4">
    <property type="protein sequence ID" value="ENSMUSP00000110760.4"/>
    <property type="gene ID" value="ENSMUSG00000025739.14"/>
</dbReference>
<dbReference type="Ensembl" id="ENSMUST00000172002.8">
    <property type="protein sequence ID" value="ENSMUSP00000131648.2"/>
    <property type="gene ID" value="ENSMUSG00000025739.14"/>
</dbReference>
<dbReference type="GeneID" id="64337"/>
<dbReference type="KEGG" id="mmu:64337"/>
<dbReference type="UCSC" id="uc008bbi.2">
    <property type="organism name" value="mouse"/>
</dbReference>
<dbReference type="AGR" id="MGI:1925616"/>
<dbReference type="CTD" id="51764"/>
<dbReference type="MGI" id="MGI:1925616">
    <property type="gene designation" value="Gng13"/>
</dbReference>
<dbReference type="VEuPathDB" id="HostDB:ENSMUSG00000025739"/>
<dbReference type="eggNOG" id="KOG4119">
    <property type="taxonomic scope" value="Eukaryota"/>
</dbReference>
<dbReference type="GeneTree" id="ENSGT00530000064157"/>
<dbReference type="HOGENOM" id="CLU_168377_1_1_1"/>
<dbReference type="InParanoid" id="Q9JMF3"/>
<dbReference type="OMA" id="DEWDAPQ"/>
<dbReference type="OrthoDB" id="9922095at2759"/>
<dbReference type="PhylomeDB" id="Q9JMF3"/>
<dbReference type="TreeFam" id="TF319909"/>
<dbReference type="Reactome" id="R-MMU-1296041">
    <property type="pathway name" value="Activation of G protein gated Potassium channels"/>
</dbReference>
<dbReference type="Reactome" id="R-MMU-202040">
    <property type="pathway name" value="G-protein activation"/>
</dbReference>
<dbReference type="Reactome" id="R-MMU-381676">
    <property type="pathway name" value="Glucagon-like Peptide-1 (GLP1) regulates insulin secretion"/>
</dbReference>
<dbReference type="Reactome" id="R-MMU-381753">
    <property type="pathway name" value="Olfactory Signaling Pathway"/>
</dbReference>
<dbReference type="Reactome" id="R-MMU-381771">
    <property type="pathway name" value="Synthesis, secretion, and inactivation of Glucagon-like Peptide-1 (GLP-1)"/>
</dbReference>
<dbReference type="Reactome" id="R-MMU-392170">
    <property type="pathway name" value="ADP signalling through P2Y purinoceptor 12"/>
</dbReference>
<dbReference type="Reactome" id="R-MMU-392451">
    <property type="pathway name" value="G beta:gamma signalling through PI3Kgamma"/>
</dbReference>
<dbReference type="Reactome" id="R-MMU-392851">
    <property type="pathway name" value="Prostacyclin signalling through prostacyclin receptor"/>
</dbReference>
<dbReference type="Reactome" id="R-MMU-400042">
    <property type="pathway name" value="Adrenaline,noradrenaline inhibits insulin secretion"/>
</dbReference>
<dbReference type="Reactome" id="R-MMU-4086398">
    <property type="pathway name" value="Ca2+ pathway"/>
</dbReference>
<dbReference type="Reactome" id="R-MMU-416476">
    <property type="pathway name" value="G alpha (q) signalling events"/>
</dbReference>
<dbReference type="Reactome" id="R-MMU-416482">
    <property type="pathway name" value="G alpha (12/13) signalling events"/>
</dbReference>
<dbReference type="Reactome" id="R-MMU-418217">
    <property type="pathway name" value="G beta:gamma signalling through PLC beta"/>
</dbReference>
<dbReference type="Reactome" id="R-MMU-418555">
    <property type="pathway name" value="G alpha (s) signalling events"/>
</dbReference>
<dbReference type="Reactome" id="R-MMU-418592">
    <property type="pathway name" value="ADP signalling through P2Y purinoceptor 1"/>
</dbReference>
<dbReference type="Reactome" id="R-MMU-418594">
    <property type="pathway name" value="G alpha (i) signalling events"/>
</dbReference>
<dbReference type="Reactome" id="R-MMU-418597">
    <property type="pathway name" value="G alpha (z) signalling events"/>
</dbReference>
<dbReference type="Reactome" id="R-MMU-420092">
    <property type="pathway name" value="Glucagon-type ligand receptors"/>
</dbReference>
<dbReference type="Reactome" id="R-MMU-428930">
    <property type="pathway name" value="Thromboxane signalling through TP receptor"/>
</dbReference>
<dbReference type="Reactome" id="R-MMU-432040">
    <property type="pathway name" value="Vasopressin regulates renal water homeostasis via Aquaporins"/>
</dbReference>
<dbReference type="Reactome" id="R-MMU-456926">
    <property type="pathway name" value="Thrombin signalling through proteinase activated receptors (PARs)"/>
</dbReference>
<dbReference type="Reactome" id="R-MMU-500657">
    <property type="pathway name" value="Presynaptic function of Kainate receptors"/>
</dbReference>
<dbReference type="Reactome" id="R-MMU-6814122">
    <property type="pathway name" value="Cooperation of PDCL (PhLP1) and TRiC/CCT in G-protein beta folding"/>
</dbReference>
<dbReference type="Reactome" id="R-MMU-8964315">
    <property type="pathway name" value="G beta:gamma signalling through BTK"/>
</dbReference>
<dbReference type="Reactome" id="R-MMU-8964616">
    <property type="pathway name" value="G beta:gamma signalling through CDC42"/>
</dbReference>
<dbReference type="Reactome" id="R-MMU-9009391">
    <property type="pathway name" value="Extra-nuclear estrogen signaling"/>
</dbReference>
<dbReference type="Reactome" id="R-MMU-9634597">
    <property type="pathway name" value="GPER1 signaling"/>
</dbReference>
<dbReference type="Reactome" id="R-MMU-9717207">
    <property type="pathway name" value="Sensory perception of sweet, bitter, and umami (glutamate) taste"/>
</dbReference>
<dbReference type="Reactome" id="R-MMU-9856530">
    <property type="pathway name" value="High laminar flow shear stress activates signaling by PIEZO1 and PECAM1:CDH5:KDR in endothelial cells"/>
</dbReference>
<dbReference type="Reactome" id="R-MMU-997272">
    <property type="pathway name" value="Inhibition of voltage gated Ca2+ channels via Gbeta/gamma subunits"/>
</dbReference>
<dbReference type="BioGRID-ORCS" id="64337">
    <property type="hits" value="1 hit in 75 CRISPR screens"/>
</dbReference>
<dbReference type="PRO" id="PR:Q9JMF3"/>
<dbReference type="Proteomes" id="UP000000589">
    <property type="component" value="Chromosome 17"/>
</dbReference>
<dbReference type="RNAct" id="Q9JMF3">
    <property type="molecule type" value="protein"/>
</dbReference>
<dbReference type="Bgee" id="ENSMUSG00000025739">
    <property type="expression patterns" value="Expressed in olfactory epithelium and 119 other cell types or tissues"/>
</dbReference>
<dbReference type="GO" id="GO:0030425">
    <property type="term" value="C:dendrite"/>
    <property type="evidence" value="ECO:0000314"/>
    <property type="project" value="MGI"/>
</dbReference>
<dbReference type="GO" id="GO:0005834">
    <property type="term" value="C:heterotrimeric G-protein complex"/>
    <property type="evidence" value="ECO:0000353"/>
    <property type="project" value="MGI"/>
</dbReference>
<dbReference type="GO" id="GO:0016020">
    <property type="term" value="C:membrane"/>
    <property type="evidence" value="ECO:0000304"/>
    <property type="project" value="MGI"/>
</dbReference>
<dbReference type="GO" id="GO:0005886">
    <property type="term" value="C:plasma membrane"/>
    <property type="evidence" value="ECO:0000304"/>
    <property type="project" value="Reactome"/>
</dbReference>
<dbReference type="GO" id="GO:0045202">
    <property type="term" value="C:synapse"/>
    <property type="evidence" value="ECO:0000314"/>
    <property type="project" value="SynGO"/>
</dbReference>
<dbReference type="GO" id="GO:0031681">
    <property type="term" value="F:G-protein beta-subunit binding"/>
    <property type="evidence" value="ECO:0000250"/>
    <property type="project" value="CAFA"/>
</dbReference>
<dbReference type="GO" id="GO:0007200">
    <property type="term" value="P:phospholipase C-activating G protein-coupled receptor signaling pathway"/>
    <property type="evidence" value="ECO:0000314"/>
    <property type="project" value="MGI"/>
</dbReference>
<dbReference type="GO" id="GO:0050909">
    <property type="term" value="P:sensory perception of taste"/>
    <property type="evidence" value="ECO:0000314"/>
    <property type="project" value="MGI"/>
</dbReference>
<dbReference type="CDD" id="cd00068">
    <property type="entry name" value="GGL"/>
    <property type="match status" value="1"/>
</dbReference>
<dbReference type="FunFam" id="4.10.260.10:FF:000004">
    <property type="entry name" value="guanine nucleotide-binding protein G(I)/G(S)/G(O) subunit gamma-13"/>
    <property type="match status" value="1"/>
</dbReference>
<dbReference type="Gene3D" id="4.10.260.10">
    <property type="entry name" value="Transducin (heterotrimeric G protein), gamma chain"/>
    <property type="match status" value="1"/>
</dbReference>
<dbReference type="InterPro" id="IPR015898">
    <property type="entry name" value="G-protein_gamma-like_dom"/>
</dbReference>
<dbReference type="InterPro" id="IPR036284">
    <property type="entry name" value="GGL_sf"/>
</dbReference>
<dbReference type="InterPro" id="IPR039227">
    <property type="entry name" value="GNG13"/>
</dbReference>
<dbReference type="PANTHER" id="PTHR15936">
    <property type="entry name" value="GUANINE NUCLEOTIDE-BINDING PROTEIN G I /G S /G O GAMMA-13 SUBUNIT"/>
    <property type="match status" value="1"/>
</dbReference>
<dbReference type="PANTHER" id="PTHR15936:SF2">
    <property type="entry name" value="GUANINE NUCLEOTIDE-BINDING PROTEIN G(I)_G(S)_G(O) SUBUNIT GAMMA-13"/>
    <property type="match status" value="1"/>
</dbReference>
<dbReference type="Pfam" id="PF00631">
    <property type="entry name" value="G-gamma"/>
    <property type="match status" value="1"/>
</dbReference>
<dbReference type="SMART" id="SM01224">
    <property type="entry name" value="G_gamma"/>
    <property type="match status" value="1"/>
</dbReference>
<dbReference type="SMART" id="SM00224">
    <property type="entry name" value="GGL"/>
    <property type="match status" value="1"/>
</dbReference>
<dbReference type="SUPFAM" id="SSF48670">
    <property type="entry name" value="Transducin (heterotrimeric G protein), gamma chain"/>
    <property type="match status" value="1"/>
</dbReference>
<dbReference type="PROSITE" id="PS50058">
    <property type="entry name" value="G_PROTEIN_GAMMA"/>
    <property type="match status" value="1"/>
</dbReference>
<evidence type="ECO:0000250" key="1"/>
<evidence type="ECO:0000305" key="2"/>
<gene>
    <name type="primary">Gng13</name>
</gene>